<sequence length="250" mass="27637">MSSARYDRAITVFSPDGHLFQVEYAMEAVRKGTVAVGVRGKDVIVLGVEKKATAKLQDARSIRKIVKLDDHICLTFAGLTADSRVLISKALMECQSYRLTVEDSPSVEYISKFIAGIQQRYTQSGGVRPFGISTLIVGFDTDGTPNLYQTDPSGSYSSWKAAAIGRSSKSVGEFLEKNYTDVSEEESIKLAVRALLEIVESGNKNIEIAVIRNKQPIVLLDEQEIDKLVAVVEAEKEIQKEQEKSEKQQK</sequence>
<feature type="chain" id="PRO_0000124152" description="Proteasome subunit alpha type-7">
    <location>
        <begin position="1"/>
        <end position="250"/>
    </location>
</feature>
<gene>
    <name type="primary">psmA7</name>
    <name type="synonym">prdE</name>
    <name type="ORF">DDB_G0272831</name>
</gene>
<accession>P34120</accession>
<accession>Q558X6</accession>
<organism>
    <name type="scientific">Dictyostelium discoideum</name>
    <name type="common">Social amoeba</name>
    <dbReference type="NCBI Taxonomy" id="44689"/>
    <lineage>
        <taxon>Eukaryota</taxon>
        <taxon>Amoebozoa</taxon>
        <taxon>Evosea</taxon>
        <taxon>Eumycetozoa</taxon>
        <taxon>Dictyostelia</taxon>
        <taxon>Dictyosteliales</taxon>
        <taxon>Dictyosteliaceae</taxon>
        <taxon>Dictyostelium</taxon>
    </lineage>
</organism>
<proteinExistence type="inferred from homology"/>
<keyword id="KW-0963">Cytoplasm</keyword>
<keyword id="KW-0539">Nucleus</keyword>
<keyword id="KW-0647">Proteasome</keyword>
<keyword id="KW-1185">Reference proteome</keyword>
<protein>
    <recommendedName>
        <fullName>Proteasome subunit alpha type-7</fullName>
    </recommendedName>
    <alternativeName>
        <fullName>Proteasome component DD5</fullName>
    </alternativeName>
</protein>
<dbReference type="EMBL" id="L22213">
    <property type="protein sequence ID" value="AAA33234.1"/>
    <property type="molecule type" value="Genomic_DNA"/>
</dbReference>
<dbReference type="EMBL" id="AAFI02000008">
    <property type="protein sequence ID" value="EAL71053.1"/>
    <property type="molecule type" value="Genomic_DNA"/>
</dbReference>
<dbReference type="RefSeq" id="XP_644940.1">
    <property type="nucleotide sequence ID" value="XM_639848.1"/>
</dbReference>
<dbReference type="SMR" id="P34120"/>
<dbReference type="FunCoup" id="P34120">
    <property type="interactions" value="747"/>
</dbReference>
<dbReference type="STRING" id="44689.P34120"/>
<dbReference type="PaxDb" id="44689-DDB0185059"/>
<dbReference type="EnsemblProtists" id="EAL71053">
    <property type="protein sequence ID" value="EAL71053"/>
    <property type="gene ID" value="DDB_G0272831"/>
</dbReference>
<dbReference type="GeneID" id="8618619"/>
<dbReference type="KEGG" id="ddi:DDB_G0272831"/>
<dbReference type="dictyBase" id="DDB_G0272831">
    <property type="gene designation" value="psmA7"/>
</dbReference>
<dbReference type="VEuPathDB" id="AmoebaDB:DDB_G0272831"/>
<dbReference type="eggNOG" id="KOG0183">
    <property type="taxonomic scope" value="Eukaryota"/>
</dbReference>
<dbReference type="HOGENOM" id="CLU_035750_4_0_1"/>
<dbReference type="InParanoid" id="P34120"/>
<dbReference type="OMA" id="ICMLDHH"/>
<dbReference type="PhylomeDB" id="P34120"/>
<dbReference type="Reactome" id="R-DDI-1236978">
    <property type="pathway name" value="Cross-presentation of soluble exogenous antigens (endosomes)"/>
</dbReference>
<dbReference type="Reactome" id="R-DDI-174084">
    <property type="pathway name" value="Autodegradation of Cdh1 by Cdh1:APC/C"/>
</dbReference>
<dbReference type="Reactome" id="R-DDI-174154">
    <property type="pathway name" value="APC/C:Cdc20 mediated degradation of Securin"/>
</dbReference>
<dbReference type="Reactome" id="R-DDI-174178">
    <property type="pathway name" value="APC/C:Cdh1 mediated degradation of Cdc20 and other APC/C:Cdh1 targeted proteins in late mitosis/early G1"/>
</dbReference>
<dbReference type="Reactome" id="R-DDI-2467813">
    <property type="pathway name" value="Separation of Sister Chromatids"/>
</dbReference>
<dbReference type="Reactome" id="R-DDI-349425">
    <property type="pathway name" value="Autodegradation of the E3 ubiquitin ligase COP1"/>
</dbReference>
<dbReference type="Reactome" id="R-DDI-382556">
    <property type="pathway name" value="ABC-family proteins mediated transport"/>
</dbReference>
<dbReference type="Reactome" id="R-DDI-450408">
    <property type="pathway name" value="AUF1 (hnRNP D0) binds and destabilizes mRNA"/>
</dbReference>
<dbReference type="Reactome" id="R-DDI-4641258">
    <property type="pathway name" value="Degradation of DVL"/>
</dbReference>
<dbReference type="Reactome" id="R-DDI-5632684">
    <property type="pathway name" value="Hedgehog 'on' state"/>
</dbReference>
<dbReference type="Reactome" id="R-DDI-5658442">
    <property type="pathway name" value="Regulation of RAS by GAPs"/>
</dbReference>
<dbReference type="Reactome" id="R-DDI-5687128">
    <property type="pathway name" value="MAPK6/MAPK4 signaling"/>
</dbReference>
<dbReference type="Reactome" id="R-DDI-5689603">
    <property type="pathway name" value="UCH proteinases"/>
</dbReference>
<dbReference type="Reactome" id="R-DDI-5689880">
    <property type="pathway name" value="Ub-specific processing proteases"/>
</dbReference>
<dbReference type="Reactome" id="R-DDI-68949">
    <property type="pathway name" value="Orc1 removal from chromatin"/>
</dbReference>
<dbReference type="Reactome" id="R-DDI-69017">
    <property type="pathway name" value="CDK-mediated phosphorylation and removal of Cdc6"/>
</dbReference>
<dbReference type="Reactome" id="R-DDI-69601">
    <property type="pathway name" value="Ubiquitin Mediated Degradation of Phosphorylated Cdc25A"/>
</dbReference>
<dbReference type="Reactome" id="R-DDI-8854050">
    <property type="pathway name" value="FBXL7 down-regulates AURKA during mitotic entry and in early mitosis"/>
</dbReference>
<dbReference type="Reactome" id="R-DDI-8948751">
    <property type="pathway name" value="Regulation of PTEN stability and activity"/>
</dbReference>
<dbReference type="Reactome" id="R-DDI-8951664">
    <property type="pathway name" value="Neddylation"/>
</dbReference>
<dbReference type="Reactome" id="R-DDI-9755511">
    <property type="pathway name" value="KEAP1-NFE2L2 pathway"/>
</dbReference>
<dbReference type="Reactome" id="R-DDI-983168">
    <property type="pathway name" value="Antigen processing: Ubiquitination &amp; Proteasome degradation"/>
</dbReference>
<dbReference type="Reactome" id="R-DDI-9907900">
    <property type="pathway name" value="Proteasome assembly"/>
</dbReference>
<dbReference type="PRO" id="PR:P34120"/>
<dbReference type="Proteomes" id="UP000002195">
    <property type="component" value="Chromosome 2"/>
</dbReference>
<dbReference type="GO" id="GO:0005737">
    <property type="term" value="C:cytoplasm"/>
    <property type="evidence" value="ECO:0000314"/>
    <property type="project" value="dictyBase"/>
</dbReference>
<dbReference type="GO" id="GO:0005634">
    <property type="term" value="C:nucleus"/>
    <property type="evidence" value="ECO:0000314"/>
    <property type="project" value="dictyBase"/>
</dbReference>
<dbReference type="GO" id="GO:0019773">
    <property type="term" value="C:proteasome core complex, alpha-subunit complex"/>
    <property type="evidence" value="ECO:0000314"/>
    <property type="project" value="dictyBase"/>
</dbReference>
<dbReference type="GO" id="GO:0010498">
    <property type="term" value="P:proteasomal protein catabolic process"/>
    <property type="evidence" value="ECO:0000314"/>
    <property type="project" value="dictyBase"/>
</dbReference>
<dbReference type="GO" id="GO:0043161">
    <property type="term" value="P:proteasome-mediated ubiquitin-dependent protein catabolic process"/>
    <property type="evidence" value="ECO:0000318"/>
    <property type="project" value="GO_Central"/>
</dbReference>
<dbReference type="CDD" id="cd03755">
    <property type="entry name" value="proteasome_alpha_type_7"/>
    <property type="match status" value="1"/>
</dbReference>
<dbReference type="FunFam" id="3.60.20.10:FF:000004">
    <property type="entry name" value="Proteasome subunit alpha type-4"/>
    <property type="match status" value="1"/>
</dbReference>
<dbReference type="Gene3D" id="3.60.20.10">
    <property type="entry name" value="Glutamine Phosphoribosylpyrophosphate, subunit 1, domain 1"/>
    <property type="match status" value="1"/>
</dbReference>
<dbReference type="InterPro" id="IPR029055">
    <property type="entry name" value="Ntn_hydrolases_N"/>
</dbReference>
<dbReference type="InterPro" id="IPR050115">
    <property type="entry name" value="Proteasome_alpha"/>
</dbReference>
<dbReference type="InterPro" id="IPR023332">
    <property type="entry name" value="Proteasome_alpha-type"/>
</dbReference>
<dbReference type="InterPro" id="IPR000426">
    <property type="entry name" value="Proteasome_asu_N"/>
</dbReference>
<dbReference type="InterPro" id="IPR001353">
    <property type="entry name" value="Proteasome_sua/b"/>
</dbReference>
<dbReference type="NCBIfam" id="NF003075">
    <property type="entry name" value="PRK03996.1"/>
    <property type="match status" value="1"/>
</dbReference>
<dbReference type="PANTHER" id="PTHR11599">
    <property type="entry name" value="PROTEASOME SUBUNIT ALPHA/BETA"/>
    <property type="match status" value="1"/>
</dbReference>
<dbReference type="Pfam" id="PF00227">
    <property type="entry name" value="Proteasome"/>
    <property type="match status" value="1"/>
</dbReference>
<dbReference type="Pfam" id="PF10584">
    <property type="entry name" value="Proteasome_A_N"/>
    <property type="match status" value="1"/>
</dbReference>
<dbReference type="SMART" id="SM00948">
    <property type="entry name" value="Proteasome_A_N"/>
    <property type="match status" value="1"/>
</dbReference>
<dbReference type="SUPFAM" id="SSF56235">
    <property type="entry name" value="N-terminal nucleophile aminohydrolases (Ntn hydrolases)"/>
    <property type="match status" value="1"/>
</dbReference>
<dbReference type="PROSITE" id="PS00388">
    <property type="entry name" value="PROTEASOME_ALPHA_1"/>
    <property type="match status" value="1"/>
</dbReference>
<dbReference type="PROSITE" id="PS51475">
    <property type="entry name" value="PROTEASOME_ALPHA_2"/>
    <property type="match status" value="1"/>
</dbReference>
<name>PSA7_DICDI</name>
<reference key="1">
    <citation type="journal article" date="1993" name="J. Struct. Biol.">
        <title>Proteasomes from Dictyostelium discoideum: characterization of structure and function.</title>
        <authorList>
            <person name="Schauer T.M."/>
            <person name="Nesper M."/>
            <person name="Kehl M."/>
            <person name="Lottspeich F."/>
            <person name="Mueller-Taubenberger A."/>
            <person name="Gerisch G."/>
            <person name="Baumeister W."/>
        </authorList>
    </citation>
    <scope>NUCLEOTIDE SEQUENCE [GENOMIC DNA]</scope>
    <source>
        <strain>AX2</strain>
    </source>
</reference>
<reference key="2">
    <citation type="journal article" date="2002" name="Nature">
        <title>Sequence and analysis of chromosome 2 of Dictyostelium discoideum.</title>
        <authorList>
            <person name="Gloeckner G."/>
            <person name="Eichinger L."/>
            <person name="Szafranski K."/>
            <person name="Pachebat J.A."/>
            <person name="Bankier A.T."/>
            <person name="Dear P.H."/>
            <person name="Lehmann R."/>
            <person name="Baumgart C."/>
            <person name="Parra G."/>
            <person name="Abril J.F."/>
            <person name="Guigo R."/>
            <person name="Kumpf K."/>
            <person name="Tunggal B."/>
            <person name="Cox E.C."/>
            <person name="Quail M.A."/>
            <person name="Platzer M."/>
            <person name="Rosenthal A."/>
            <person name="Noegel A.A."/>
        </authorList>
    </citation>
    <scope>NUCLEOTIDE SEQUENCE [LARGE SCALE GENOMIC DNA]</scope>
    <source>
        <strain>AX4</strain>
    </source>
</reference>
<reference key="3">
    <citation type="journal article" date="2005" name="Nature">
        <title>The genome of the social amoeba Dictyostelium discoideum.</title>
        <authorList>
            <person name="Eichinger L."/>
            <person name="Pachebat J.A."/>
            <person name="Gloeckner G."/>
            <person name="Rajandream M.A."/>
            <person name="Sucgang R."/>
            <person name="Berriman M."/>
            <person name="Song J."/>
            <person name="Olsen R."/>
            <person name="Szafranski K."/>
            <person name="Xu Q."/>
            <person name="Tunggal B."/>
            <person name="Kummerfeld S."/>
            <person name="Madera M."/>
            <person name="Konfortov B.A."/>
            <person name="Rivero F."/>
            <person name="Bankier A.T."/>
            <person name="Lehmann R."/>
            <person name="Hamlin N."/>
            <person name="Davies R."/>
            <person name="Gaudet P."/>
            <person name="Fey P."/>
            <person name="Pilcher K."/>
            <person name="Chen G."/>
            <person name="Saunders D."/>
            <person name="Sodergren E.J."/>
            <person name="Davis P."/>
            <person name="Kerhornou A."/>
            <person name="Nie X."/>
            <person name="Hall N."/>
            <person name="Anjard C."/>
            <person name="Hemphill L."/>
            <person name="Bason N."/>
            <person name="Farbrother P."/>
            <person name="Desany B."/>
            <person name="Just E."/>
            <person name="Morio T."/>
            <person name="Rost R."/>
            <person name="Churcher C.M."/>
            <person name="Cooper J."/>
            <person name="Haydock S."/>
            <person name="van Driessche N."/>
            <person name="Cronin A."/>
            <person name="Goodhead I."/>
            <person name="Muzny D.M."/>
            <person name="Mourier T."/>
            <person name="Pain A."/>
            <person name="Lu M."/>
            <person name="Harper D."/>
            <person name="Lindsay R."/>
            <person name="Hauser H."/>
            <person name="James K.D."/>
            <person name="Quiles M."/>
            <person name="Madan Babu M."/>
            <person name="Saito T."/>
            <person name="Buchrieser C."/>
            <person name="Wardroper A."/>
            <person name="Felder M."/>
            <person name="Thangavelu M."/>
            <person name="Johnson D."/>
            <person name="Knights A."/>
            <person name="Loulseged H."/>
            <person name="Mungall K.L."/>
            <person name="Oliver K."/>
            <person name="Price C."/>
            <person name="Quail M.A."/>
            <person name="Urushihara H."/>
            <person name="Hernandez J."/>
            <person name="Rabbinowitsch E."/>
            <person name="Steffen D."/>
            <person name="Sanders M."/>
            <person name="Ma J."/>
            <person name="Kohara Y."/>
            <person name="Sharp S."/>
            <person name="Simmonds M.N."/>
            <person name="Spiegler S."/>
            <person name="Tivey A."/>
            <person name="Sugano S."/>
            <person name="White B."/>
            <person name="Walker D."/>
            <person name="Woodward J.R."/>
            <person name="Winckler T."/>
            <person name="Tanaka Y."/>
            <person name="Shaulsky G."/>
            <person name="Schleicher M."/>
            <person name="Weinstock G.M."/>
            <person name="Rosenthal A."/>
            <person name="Cox E.C."/>
            <person name="Chisholm R.L."/>
            <person name="Gibbs R.A."/>
            <person name="Loomis W.F."/>
            <person name="Platzer M."/>
            <person name="Kay R.R."/>
            <person name="Williams J.G."/>
            <person name="Dear P.H."/>
            <person name="Noegel A.A."/>
            <person name="Barrell B.G."/>
            <person name="Kuspa A."/>
        </authorList>
    </citation>
    <scope>NUCLEOTIDE SEQUENCE [LARGE SCALE GENOMIC DNA]</scope>
    <source>
        <strain>AX4</strain>
    </source>
</reference>
<evidence type="ECO:0000250" key="1"/>
<evidence type="ECO:0000255" key="2">
    <source>
        <dbReference type="PROSITE-ProRule" id="PRU00808"/>
    </source>
</evidence>
<comment type="function">
    <text>The proteasome is a multicatalytic proteinase complex which is characterized by its ability to cleave peptides with Arg, Phe, Tyr, Leu, and Glu adjacent to the leaving group at neutral or slightly basic pH. The proteasome has an ATP-dependent proteolytic activity.</text>
</comment>
<comment type="subunit">
    <text evidence="1">The 26S proteasome consists of a 20S proteasome core and two 19S regulatory subunits. The 20S proteasome core is composed of 28 subunits that are arranged in four stacked rings, resulting in a barrel-shaped structure. The two end rings are each formed by seven alpha subunits, and the two central rings are each formed by seven beta subunits. The catalytic chamber with the active sites is on the inside of the barrel (By similarity).</text>
</comment>
<comment type="subcellular location">
    <subcellularLocation>
        <location evidence="1">Cytoplasm</location>
    </subcellularLocation>
    <subcellularLocation>
        <location evidence="1">Nucleus</location>
    </subcellularLocation>
</comment>
<comment type="similarity">
    <text evidence="2">Belongs to the peptidase T1A family.</text>
</comment>